<keyword id="KW-0963">Cytoplasm</keyword>
<keyword id="KW-0448">Lipopolysaccharide biosynthesis</keyword>
<keyword id="KW-0548">Nucleotidyltransferase</keyword>
<keyword id="KW-1185">Reference proteome</keyword>
<keyword id="KW-0808">Transferase</keyword>
<accession>A1WSH5</accession>
<comment type="function">
    <text evidence="1">Activates KDO (a required 8-carbon sugar) for incorporation into bacterial lipopolysaccharide in Gram-negative bacteria.</text>
</comment>
<comment type="catalytic activity">
    <reaction evidence="1">
        <text>3-deoxy-alpha-D-manno-oct-2-ulosonate + CTP = CMP-3-deoxy-beta-D-manno-octulosonate + diphosphate</text>
        <dbReference type="Rhea" id="RHEA:23448"/>
        <dbReference type="ChEBI" id="CHEBI:33019"/>
        <dbReference type="ChEBI" id="CHEBI:37563"/>
        <dbReference type="ChEBI" id="CHEBI:85986"/>
        <dbReference type="ChEBI" id="CHEBI:85987"/>
        <dbReference type="EC" id="2.7.7.38"/>
    </reaction>
</comment>
<comment type="pathway">
    <text evidence="1">Nucleotide-sugar biosynthesis; CMP-3-deoxy-D-manno-octulosonate biosynthesis; CMP-3-deoxy-D-manno-octulosonate from 3-deoxy-D-manno-octulosonate and CTP: step 1/1.</text>
</comment>
<comment type="pathway">
    <text evidence="1">Bacterial outer membrane biogenesis; lipopolysaccharide biosynthesis.</text>
</comment>
<comment type="subcellular location">
    <subcellularLocation>
        <location evidence="1">Cytoplasm</location>
    </subcellularLocation>
</comment>
<comment type="similarity">
    <text evidence="1">Belongs to the KdsB family.</text>
</comment>
<sequence length="272" mass="28593">MSAAPDAQDSTANDRFTVLIPARMASTRLPGKPLADLAGLPMVVRVAKRAVHSAADRVLVATDDARILQACAAHGVEAILTRADHASGSDRLAEACAQLGLADQHIVVNVQGDEPLIAPELIDAVAALLPARPEAGMGTAAHAIATLADYHNPQVVKVVLDARGLAQYFSRAPIPFARNPAEHGWCSAGAAPGMGTLAGHAPLRHIGIYSYRAGFLRQLTQLAPAPTETIEALEQLRALWHGHRIAVHLTAAAAGPGVDTPEDLERVRRLLL</sequence>
<dbReference type="EC" id="2.7.7.38" evidence="1"/>
<dbReference type="EMBL" id="CP000542">
    <property type="protein sequence ID" value="ABM60582.1"/>
    <property type="molecule type" value="Genomic_DNA"/>
</dbReference>
<dbReference type="RefSeq" id="WP_011812560.1">
    <property type="nucleotide sequence ID" value="NC_008786.1"/>
</dbReference>
<dbReference type="SMR" id="A1WSH5"/>
<dbReference type="STRING" id="391735.Veis_4894"/>
<dbReference type="GeneID" id="76463155"/>
<dbReference type="KEGG" id="vei:Veis_4894"/>
<dbReference type="eggNOG" id="COG1212">
    <property type="taxonomic scope" value="Bacteria"/>
</dbReference>
<dbReference type="HOGENOM" id="CLU_065038_1_0_4"/>
<dbReference type="OrthoDB" id="9815559at2"/>
<dbReference type="UniPathway" id="UPA00030"/>
<dbReference type="UniPathway" id="UPA00358">
    <property type="reaction ID" value="UER00476"/>
</dbReference>
<dbReference type="Proteomes" id="UP000000374">
    <property type="component" value="Chromosome"/>
</dbReference>
<dbReference type="GO" id="GO:0005829">
    <property type="term" value="C:cytosol"/>
    <property type="evidence" value="ECO:0007669"/>
    <property type="project" value="TreeGrafter"/>
</dbReference>
<dbReference type="GO" id="GO:0008690">
    <property type="term" value="F:3-deoxy-manno-octulosonate cytidylyltransferase activity"/>
    <property type="evidence" value="ECO:0007669"/>
    <property type="project" value="UniProtKB-UniRule"/>
</dbReference>
<dbReference type="GO" id="GO:0033468">
    <property type="term" value="P:CMP-keto-3-deoxy-D-manno-octulosonic acid biosynthetic process"/>
    <property type="evidence" value="ECO:0007669"/>
    <property type="project" value="UniProtKB-UniRule"/>
</dbReference>
<dbReference type="GO" id="GO:0009103">
    <property type="term" value="P:lipopolysaccharide biosynthetic process"/>
    <property type="evidence" value="ECO:0007669"/>
    <property type="project" value="UniProtKB-UniRule"/>
</dbReference>
<dbReference type="CDD" id="cd02517">
    <property type="entry name" value="CMP-KDO-Synthetase"/>
    <property type="match status" value="1"/>
</dbReference>
<dbReference type="FunFam" id="3.90.550.10:FF:000011">
    <property type="entry name" value="3-deoxy-manno-octulosonate cytidylyltransferase"/>
    <property type="match status" value="1"/>
</dbReference>
<dbReference type="Gene3D" id="3.90.550.10">
    <property type="entry name" value="Spore Coat Polysaccharide Biosynthesis Protein SpsA, Chain A"/>
    <property type="match status" value="1"/>
</dbReference>
<dbReference type="HAMAP" id="MF_00057">
    <property type="entry name" value="KdsB"/>
    <property type="match status" value="1"/>
</dbReference>
<dbReference type="InterPro" id="IPR003329">
    <property type="entry name" value="Cytidylyl_trans"/>
</dbReference>
<dbReference type="InterPro" id="IPR004528">
    <property type="entry name" value="KdsB"/>
</dbReference>
<dbReference type="InterPro" id="IPR029044">
    <property type="entry name" value="Nucleotide-diphossugar_trans"/>
</dbReference>
<dbReference type="NCBIfam" id="TIGR00466">
    <property type="entry name" value="kdsB"/>
    <property type="match status" value="1"/>
</dbReference>
<dbReference type="NCBIfam" id="NF003952">
    <property type="entry name" value="PRK05450.1-5"/>
    <property type="match status" value="1"/>
</dbReference>
<dbReference type="NCBIfam" id="NF009905">
    <property type="entry name" value="PRK13368.1"/>
    <property type="match status" value="1"/>
</dbReference>
<dbReference type="PANTHER" id="PTHR42866">
    <property type="entry name" value="3-DEOXY-MANNO-OCTULOSONATE CYTIDYLYLTRANSFERASE"/>
    <property type="match status" value="1"/>
</dbReference>
<dbReference type="PANTHER" id="PTHR42866:SF2">
    <property type="entry name" value="3-DEOXY-MANNO-OCTULOSONATE CYTIDYLYLTRANSFERASE, MITOCHONDRIAL"/>
    <property type="match status" value="1"/>
</dbReference>
<dbReference type="Pfam" id="PF02348">
    <property type="entry name" value="CTP_transf_3"/>
    <property type="match status" value="1"/>
</dbReference>
<dbReference type="SUPFAM" id="SSF53448">
    <property type="entry name" value="Nucleotide-diphospho-sugar transferases"/>
    <property type="match status" value="1"/>
</dbReference>
<protein>
    <recommendedName>
        <fullName evidence="1">3-deoxy-manno-octulosonate cytidylyltransferase</fullName>
        <ecNumber evidence="1">2.7.7.38</ecNumber>
    </recommendedName>
    <alternativeName>
        <fullName evidence="1">CMP-2-keto-3-deoxyoctulosonic acid synthase</fullName>
        <shortName evidence="1">CKS</shortName>
        <shortName evidence="1">CMP-KDO synthase</shortName>
    </alternativeName>
</protein>
<name>KDSB_VEREI</name>
<organism>
    <name type="scientific">Verminephrobacter eiseniae (strain EF01-2)</name>
    <dbReference type="NCBI Taxonomy" id="391735"/>
    <lineage>
        <taxon>Bacteria</taxon>
        <taxon>Pseudomonadati</taxon>
        <taxon>Pseudomonadota</taxon>
        <taxon>Betaproteobacteria</taxon>
        <taxon>Burkholderiales</taxon>
        <taxon>Comamonadaceae</taxon>
        <taxon>Verminephrobacter</taxon>
    </lineage>
</organism>
<gene>
    <name evidence="1" type="primary">kdsB</name>
    <name type="ordered locus">Veis_4894</name>
</gene>
<proteinExistence type="inferred from homology"/>
<feature type="chain" id="PRO_0000370168" description="3-deoxy-manno-octulosonate cytidylyltransferase">
    <location>
        <begin position="1"/>
        <end position="272"/>
    </location>
</feature>
<reference key="1">
    <citation type="submission" date="2006-12" db="EMBL/GenBank/DDBJ databases">
        <title>Complete sequence of chromosome 1 of Verminephrobacter eiseniae EF01-2.</title>
        <authorList>
            <person name="Copeland A."/>
            <person name="Lucas S."/>
            <person name="Lapidus A."/>
            <person name="Barry K."/>
            <person name="Detter J.C."/>
            <person name="Glavina del Rio T."/>
            <person name="Dalin E."/>
            <person name="Tice H."/>
            <person name="Pitluck S."/>
            <person name="Chertkov O."/>
            <person name="Brettin T."/>
            <person name="Bruce D."/>
            <person name="Han C."/>
            <person name="Tapia R."/>
            <person name="Gilna P."/>
            <person name="Schmutz J."/>
            <person name="Larimer F."/>
            <person name="Land M."/>
            <person name="Hauser L."/>
            <person name="Kyrpides N."/>
            <person name="Kim E."/>
            <person name="Stahl D."/>
            <person name="Richardson P."/>
        </authorList>
    </citation>
    <scope>NUCLEOTIDE SEQUENCE [LARGE SCALE GENOMIC DNA]</scope>
    <source>
        <strain>EF01-2</strain>
    </source>
</reference>
<evidence type="ECO:0000255" key="1">
    <source>
        <dbReference type="HAMAP-Rule" id="MF_00057"/>
    </source>
</evidence>